<feature type="chain" id="PRO_0000078215" description="Neprilysin">
    <location>
        <begin position="1" status="less than"/>
        <end position="26" status="greater than"/>
    </location>
</feature>
<feature type="non-terminal residue">
    <location>
        <position position="1"/>
    </location>
</feature>
<feature type="non-terminal residue">
    <location>
        <position position="26"/>
    </location>
</feature>
<organism>
    <name type="scientific">Sus scrofa</name>
    <name type="common">Pig</name>
    <dbReference type="NCBI Taxonomy" id="9823"/>
    <lineage>
        <taxon>Eukaryota</taxon>
        <taxon>Metazoa</taxon>
        <taxon>Chordata</taxon>
        <taxon>Craniata</taxon>
        <taxon>Vertebrata</taxon>
        <taxon>Euteleostomi</taxon>
        <taxon>Mammalia</taxon>
        <taxon>Eutheria</taxon>
        <taxon>Laurasiatheria</taxon>
        <taxon>Artiodactyla</taxon>
        <taxon>Suina</taxon>
        <taxon>Suidae</taxon>
        <taxon>Sus</taxon>
    </lineage>
</organism>
<reference key="1">
    <citation type="journal article" date="1986" name="Biochem. J.">
        <title>The N-terminal amino acid sequence of pig kidney endopeptidase-24.11 shows homology with pro-sucrase-isomaltase.</title>
        <authorList>
            <person name="Fulcher I.S."/>
            <person name="Pappin D.J.C."/>
            <person name="Kenny A.J."/>
        </authorList>
    </citation>
    <scope>PROTEIN SEQUENCE</scope>
    <source>
        <tissue>Kidney</tissue>
    </source>
</reference>
<protein>
    <recommendedName>
        <fullName>Neprilysin</fullName>
        <ecNumber evidence="1">3.4.24.11</ecNumber>
    </recommendedName>
    <alternativeName>
        <fullName>Atriopeptidase</fullName>
    </alternativeName>
    <alternativeName>
        <fullName>Enkephalinase</fullName>
    </alternativeName>
    <alternativeName>
        <fullName evidence="3">Neutral endopeptidase 24.11</fullName>
        <shortName>NEP</shortName>
        <shortName>Neutral endopeptidase</shortName>
    </alternativeName>
    <alternativeName>
        <fullName>Skin fibroblast elastase</fullName>
        <shortName>SFE</shortName>
    </alternativeName>
    <cdAntigenName>CD10</cdAntigenName>
</protein>
<accession>P19621</accession>
<comment type="function">
    <text evidence="1">Thermolysin-like specificity, but is almost confined on acting on polypeptides of up to 30 amino acids. Biologically important in the destruction of opioid peptides such as Met- and Leu-enkephalins by cleavage of a Gly-Phe bond. Catalyzes cleavage of bradykinin, substance P and neurotensin peptides. Able to cleave angiotensin-1, angiotensin-2 and angiotensin 1-9. Involved in the degradation of atrial natriuretic factor (ANF) and brain natriuretic factor (BNP(1-32)). Displays UV-inducible elastase activity toward skin preelastic and elastic fibers.</text>
</comment>
<comment type="catalytic activity">
    <reaction evidence="1">
        <text>Preferential cleavage of polypeptides between hydrophobic residues, particularly with Phe or Tyr at P1'.</text>
        <dbReference type="EC" id="3.4.24.11"/>
    </reaction>
</comment>
<comment type="catalytic activity">
    <reaction evidence="1">
        <text>substance P + H2O = substance P(1-9) + L-Leu-L-Met-NH2</text>
        <dbReference type="Rhea" id="RHEA:71459"/>
        <dbReference type="ChEBI" id="CHEBI:15377"/>
        <dbReference type="ChEBI" id="CHEBI:190692"/>
        <dbReference type="ChEBI" id="CHEBI:190693"/>
        <dbReference type="ChEBI" id="CHEBI:190700"/>
    </reaction>
    <physiologicalReaction direction="left-to-right" evidence="1">
        <dbReference type="Rhea" id="RHEA:71460"/>
    </physiologicalReaction>
</comment>
<comment type="catalytic activity">
    <reaction evidence="1">
        <text>substance P + H2O = substance P(1-7) + L-Phe-Gly-L-Leu-L-Met-NH2</text>
        <dbReference type="Rhea" id="RHEA:71467"/>
        <dbReference type="ChEBI" id="CHEBI:15377"/>
        <dbReference type="ChEBI" id="CHEBI:190692"/>
        <dbReference type="ChEBI" id="CHEBI:190695"/>
        <dbReference type="ChEBI" id="CHEBI:190698"/>
    </reaction>
    <physiologicalReaction direction="left-to-right" evidence="1">
        <dbReference type="Rhea" id="RHEA:71468"/>
    </physiologicalReaction>
</comment>
<comment type="catalytic activity">
    <reaction evidence="1">
        <text>neurotensin + H2O = neurotensin(1-11) + L-isoleucyl-L-leucine</text>
        <dbReference type="Rhea" id="RHEA:71475"/>
        <dbReference type="ChEBI" id="CHEBI:15377"/>
        <dbReference type="ChEBI" id="CHEBI:147362"/>
        <dbReference type="ChEBI" id="CHEBI:190704"/>
        <dbReference type="ChEBI" id="CHEBI:190706"/>
    </reaction>
    <physiologicalReaction direction="left-to-right" evidence="1">
        <dbReference type="Rhea" id="RHEA:71476"/>
    </physiologicalReaction>
</comment>
<comment type="catalytic activity">
    <reaction evidence="1">
        <text>neurotensin + H2O = neurotensin(1-10) + L-tyrosyl-L-isoleucyl-L-leucine</text>
        <dbReference type="Rhea" id="RHEA:71479"/>
        <dbReference type="ChEBI" id="CHEBI:15377"/>
        <dbReference type="ChEBI" id="CHEBI:147362"/>
        <dbReference type="ChEBI" id="CHEBI:190705"/>
        <dbReference type="ChEBI" id="CHEBI:190707"/>
    </reaction>
    <physiologicalReaction direction="left-to-right" evidence="1">
        <dbReference type="Rhea" id="RHEA:71480"/>
    </physiologicalReaction>
</comment>
<comment type="cofactor">
    <cofactor evidence="1">
        <name>Zn(2+)</name>
        <dbReference type="ChEBI" id="CHEBI:29105"/>
    </cofactor>
    <text evidence="1">Binds 1 zinc ion per subunit.</text>
</comment>
<comment type="subcellular location">
    <subcellularLocation>
        <location evidence="1">Cell membrane</location>
        <topology evidence="2">Single-pass type II membrane protein</topology>
    </subcellularLocation>
</comment>
<comment type="similarity">
    <text evidence="4">Belongs to the peptidase M13 family.</text>
</comment>
<evidence type="ECO:0000250" key="1">
    <source>
        <dbReference type="UniProtKB" id="P08473"/>
    </source>
</evidence>
<evidence type="ECO:0000255" key="2"/>
<evidence type="ECO:0000303" key="3">
    <source>
    </source>
</evidence>
<evidence type="ECO:0000305" key="4"/>
<gene>
    <name type="primary">MME</name>
</gene>
<name>NEP_PIG</name>
<proteinExistence type="evidence at protein level"/>
<keyword id="KW-1003">Cell membrane</keyword>
<keyword id="KW-0903">Direct protein sequencing</keyword>
<keyword id="KW-0378">Hydrolase</keyword>
<keyword id="KW-0472">Membrane</keyword>
<keyword id="KW-0482">Metalloprotease</keyword>
<keyword id="KW-0645">Protease</keyword>
<keyword id="KW-1185">Reference proteome</keyword>
<keyword id="KW-0812">Transmembrane</keyword>
<keyword id="KW-0862">Zinc</keyword>
<sequence>PKPKKKQRWTPLEISLEVLVLVLVXI</sequence>
<dbReference type="EC" id="3.4.24.11" evidence="1"/>
<dbReference type="PIR" id="A26070">
    <property type="entry name" value="A26070"/>
</dbReference>
<dbReference type="STRING" id="9823.ENSSSCP00000057965"/>
<dbReference type="BindingDB" id="P19621"/>
<dbReference type="ChEMBL" id="CHEMBL6107"/>
<dbReference type="DrugCentral" id="P19621"/>
<dbReference type="eggNOG" id="KOG3624">
    <property type="taxonomic scope" value="Eukaryota"/>
</dbReference>
<dbReference type="InParanoid" id="P19621"/>
<dbReference type="Proteomes" id="UP000008227">
    <property type="component" value="Unplaced"/>
</dbReference>
<dbReference type="Proteomes" id="UP000314985">
    <property type="component" value="Unplaced"/>
</dbReference>
<dbReference type="Proteomes" id="UP000694570">
    <property type="component" value="Unplaced"/>
</dbReference>
<dbReference type="Proteomes" id="UP000694571">
    <property type="component" value="Unplaced"/>
</dbReference>
<dbReference type="Proteomes" id="UP000694720">
    <property type="component" value="Unplaced"/>
</dbReference>
<dbReference type="Proteomes" id="UP000694722">
    <property type="component" value="Unplaced"/>
</dbReference>
<dbReference type="Proteomes" id="UP000694723">
    <property type="component" value="Unplaced"/>
</dbReference>
<dbReference type="Proteomes" id="UP000694724">
    <property type="component" value="Unplaced"/>
</dbReference>
<dbReference type="Proteomes" id="UP000694725">
    <property type="component" value="Unplaced"/>
</dbReference>
<dbReference type="Proteomes" id="UP000694726">
    <property type="component" value="Unplaced"/>
</dbReference>
<dbReference type="Proteomes" id="UP000694727">
    <property type="component" value="Unplaced"/>
</dbReference>
<dbReference type="Proteomes" id="UP000694728">
    <property type="component" value="Unplaced"/>
</dbReference>
<dbReference type="GO" id="GO:0005886">
    <property type="term" value="C:plasma membrane"/>
    <property type="evidence" value="ECO:0007669"/>
    <property type="project" value="UniProtKB-SubCell"/>
</dbReference>
<dbReference type="GO" id="GO:0004222">
    <property type="term" value="F:metalloendopeptidase activity"/>
    <property type="evidence" value="ECO:0000250"/>
    <property type="project" value="UniProtKB"/>
</dbReference>
<dbReference type="GO" id="GO:0010815">
    <property type="term" value="P:bradykinin catabolic process"/>
    <property type="evidence" value="ECO:0000250"/>
    <property type="project" value="UniProtKB"/>
</dbReference>
<dbReference type="GO" id="GO:0042447">
    <property type="term" value="P:hormone catabolic process"/>
    <property type="evidence" value="ECO:0000250"/>
    <property type="project" value="UniProtKB"/>
</dbReference>
<dbReference type="GO" id="GO:0006508">
    <property type="term" value="P:proteolysis"/>
    <property type="evidence" value="ECO:0007669"/>
    <property type="project" value="UniProtKB-KW"/>
</dbReference>
<dbReference type="GO" id="GO:0010814">
    <property type="term" value="P:substance P catabolic process"/>
    <property type="evidence" value="ECO:0000250"/>
    <property type="project" value="UniProtKB"/>
</dbReference>